<reference key="1">
    <citation type="submission" date="2006-08" db="EMBL/GenBank/DDBJ databases">
        <title>Complete sequence of Shewanella sp. MR-4.</title>
        <authorList>
            <consortium name="US DOE Joint Genome Institute"/>
            <person name="Copeland A."/>
            <person name="Lucas S."/>
            <person name="Lapidus A."/>
            <person name="Barry K."/>
            <person name="Detter J.C."/>
            <person name="Glavina del Rio T."/>
            <person name="Hammon N."/>
            <person name="Israni S."/>
            <person name="Dalin E."/>
            <person name="Tice H."/>
            <person name="Pitluck S."/>
            <person name="Kiss H."/>
            <person name="Brettin T."/>
            <person name="Bruce D."/>
            <person name="Han C."/>
            <person name="Tapia R."/>
            <person name="Gilna P."/>
            <person name="Schmutz J."/>
            <person name="Larimer F."/>
            <person name="Land M."/>
            <person name="Hauser L."/>
            <person name="Kyrpides N."/>
            <person name="Mikhailova N."/>
            <person name="Nealson K."/>
            <person name="Konstantinidis K."/>
            <person name="Klappenbach J."/>
            <person name="Tiedje J."/>
            <person name="Richardson P."/>
        </authorList>
    </citation>
    <scope>NUCLEOTIDE SEQUENCE [LARGE SCALE GENOMIC DNA]</scope>
    <source>
        <strain>MR-4</strain>
    </source>
</reference>
<proteinExistence type="inferred from homology"/>
<accession>Q0HI69</accession>
<dbReference type="EMBL" id="CP000446">
    <property type="protein sequence ID" value="ABI39248.1"/>
    <property type="molecule type" value="Genomic_DNA"/>
</dbReference>
<dbReference type="RefSeq" id="WP_011622938.1">
    <property type="nucleotide sequence ID" value="NC_008321.1"/>
</dbReference>
<dbReference type="SMR" id="Q0HI69"/>
<dbReference type="GeneID" id="94728263"/>
<dbReference type="KEGG" id="she:Shewmr4_2175"/>
<dbReference type="HOGENOM" id="CLU_137929_2_2_6"/>
<dbReference type="GO" id="GO:0051301">
    <property type="term" value="P:cell division"/>
    <property type="evidence" value="ECO:0007669"/>
    <property type="project" value="UniProtKB-KW"/>
</dbReference>
<dbReference type="GO" id="GO:0032955">
    <property type="term" value="P:regulation of division septum assembly"/>
    <property type="evidence" value="ECO:0007669"/>
    <property type="project" value="InterPro"/>
</dbReference>
<dbReference type="FunFam" id="3.30.1070.10:FF:000001">
    <property type="entry name" value="Cell division topological specificity factor"/>
    <property type="match status" value="1"/>
</dbReference>
<dbReference type="Gene3D" id="3.30.1070.10">
    <property type="entry name" value="Cell division topological specificity factor MinE"/>
    <property type="match status" value="1"/>
</dbReference>
<dbReference type="HAMAP" id="MF_00262">
    <property type="entry name" value="MinE"/>
    <property type="match status" value="1"/>
</dbReference>
<dbReference type="InterPro" id="IPR005527">
    <property type="entry name" value="MinE"/>
</dbReference>
<dbReference type="InterPro" id="IPR036707">
    <property type="entry name" value="MinE_sf"/>
</dbReference>
<dbReference type="NCBIfam" id="TIGR01215">
    <property type="entry name" value="minE"/>
    <property type="match status" value="1"/>
</dbReference>
<dbReference type="NCBIfam" id="NF001422">
    <property type="entry name" value="PRK00296.1"/>
    <property type="match status" value="1"/>
</dbReference>
<dbReference type="Pfam" id="PF03776">
    <property type="entry name" value="MinE"/>
    <property type="match status" value="1"/>
</dbReference>
<dbReference type="SUPFAM" id="SSF55229">
    <property type="entry name" value="Cell division protein MinE topological specificity domain"/>
    <property type="match status" value="1"/>
</dbReference>
<comment type="function">
    <text evidence="1">Prevents the cell division inhibition by proteins MinC and MinD at internal division sites while permitting inhibition at polar sites. This ensures cell division at the proper site by restricting the formation of a division septum at the midpoint of the long axis of the cell.</text>
</comment>
<comment type="similarity">
    <text evidence="1">Belongs to the MinE family.</text>
</comment>
<sequence>MSLLDYFKSKKKPSTAVMAKERLQIIVAHQRGQRDTPDYFPQMKQEIIAVIRKYVHISDDQVSVQLDQNDDNLSVLELNVTLPDR</sequence>
<evidence type="ECO:0000255" key="1">
    <source>
        <dbReference type="HAMAP-Rule" id="MF_00262"/>
    </source>
</evidence>
<feature type="chain" id="PRO_0000298186" description="Cell division topological specificity factor">
    <location>
        <begin position="1"/>
        <end position="85"/>
    </location>
</feature>
<keyword id="KW-0131">Cell cycle</keyword>
<keyword id="KW-0132">Cell division</keyword>
<gene>
    <name evidence="1" type="primary">minE</name>
    <name type="ordered locus">Shewmr4_2175</name>
</gene>
<name>MINE_SHESM</name>
<organism>
    <name type="scientific">Shewanella sp. (strain MR-4)</name>
    <dbReference type="NCBI Taxonomy" id="60480"/>
    <lineage>
        <taxon>Bacteria</taxon>
        <taxon>Pseudomonadati</taxon>
        <taxon>Pseudomonadota</taxon>
        <taxon>Gammaproteobacteria</taxon>
        <taxon>Alteromonadales</taxon>
        <taxon>Shewanellaceae</taxon>
        <taxon>Shewanella</taxon>
    </lineage>
</organism>
<protein>
    <recommendedName>
        <fullName evidence="1">Cell division topological specificity factor</fullName>
    </recommendedName>
</protein>